<protein>
    <recommendedName>
        <fullName evidence="1">Flavohemoprotein</fullName>
    </recommendedName>
    <alternativeName>
        <fullName evidence="1">Flavohemoglobin</fullName>
    </alternativeName>
    <alternativeName>
        <fullName evidence="1">Hemoglobin-like protein</fullName>
    </alternativeName>
    <alternativeName>
        <fullName evidence="1">Nitric oxide dioxygenase</fullName>
        <shortName evidence="1">NO oxygenase</shortName>
        <shortName evidence="1">NOD</shortName>
        <ecNumber evidence="1">1.14.12.17</ecNumber>
    </alternativeName>
</protein>
<accession>Q7UIY1</accession>
<name>HMP_RHOBA</name>
<comment type="catalytic activity">
    <reaction evidence="1">
        <text>2 nitric oxide + NADPH + 2 O2 = 2 nitrate + NADP(+) + H(+)</text>
        <dbReference type="Rhea" id="RHEA:19465"/>
        <dbReference type="ChEBI" id="CHEBI:15378"/>
        <dbReference type="ChEBI" id="CHEBI:15379"/>
        <dbReference type="ChEBI" id="CHEBI:16480"/>
        <dbReference type="ChEBI" id="CHEBI:17632"/>
        <dbReference type="ChEBI" id="CHEBI:57783"/>
        <dbReference type="ChEBI" id="CHEBI:58349"/>
        <dbReference type="EC" id="1.14.12.17"/>
    </reaction>
</comment>
<comment type="catalytic activity">
    <reaction evidence="1">
        <text>2 nitric oxide + NADH + 2 O2 = 2 nitrate + NAD(+) + H(+)</text>
        <dbReference type="Rhea" id="RHEA:19469"/>
        <dbReference type="ChEBI" id="CHEBI:15378"/>
        <dbReference type="ChEBI" id="CHEBI:15379"/>
        <dbReference type="ChEBI" id="CHEBI:16480"/>
        <dbReference type="ChEBI" id="CHEBI:17632"/>
        <dbReference type="ChEBI" id="CHEBI:57540"/>
        <dbReference type="ChEBI" id="CHEBI:57945"/>
        <dbReference type="EC" id="1.14.12.17"/>
    </reaction>
</comment>
<comment type="cofactor">
    <cofactor evidence="1">
        <name>heme b</name>
        <dbReference type="ChEBI" id="CHEBI:60344"/>
    </cofactor>
    <text evidence="1">Binds 1 heme b (iron(II)-protoporphyrin IX) group per subunit.</text>
</comment>
<comment type="cofactor">
    <cofactor evidence="1">
        <name>FAD</name>
        <dbReference type="ChEBI" id="CHEBI:57692"/>
    </cofactor>
    <text evidence="1">Binds 1 FAD per subunit.</text>
</comment>
<comment type="domain">
    <text>Consists of two distinct domains; an N-terminal heme-containing oxygen-binding domain and a C-terminal reductase domain with binding sites for FAD and NAD(P)H.</text>
</comment>
<comment type="similarity">
    <text evidence="1">Belongs to the globin family. Two-domain flavohemoproteins subfamily.</text>
</comment>
<comment type="similarity">
    <text evidence="1">In the C-terminal section; belongs to the flavoprotein pyridine nucleotide cytochrome reductase family.</text>
</comment>
<comment type="sequence caution" evidence="3">
    <conflict type="erroneous initiation">
        <sequence resource="EMBL-CDS" id="CAD77481"/>
    </conflict>
</comment>
<feature type="chain" id="PRO_0000052443" description="Flavohemoprotein">
    <location>
        <begin position="1"/>
        <end position="408"/>
    </location>
</feature>
<feature type="domain" description="Globin" evidence="2">
    <location>
        <begin position="1"/>
        <end position="138"/>
    </location>
</feature>
<feature type="domain" description="FAD-binding FR-type" evidence="1">
    <location>
        <begin position="152"/>
        <end position="263"/>
    </location>
</feature>
<feature type="region of interest" description="Reductase">
    <location>
        <begin position="149"/>
        <end position="408"/>
    </location>
</feature>
<feature type="active site" description="Charge relay system" evidence="1">
    <location>
        <position position="95"/>
    </location>
</feature>
<feature type="active site" description="Charge relay system" evidence="1">
    <location>
        <position position="137"/>
    </location>
</feature>
<feature type="binding site" description="proximal binding residue" evidence="1">
    <location>
        <position position="85"/>
    </location>
    <ligand>
        <name>heme b</name>
        <dbReference type="ChEBI" id="CHEBI:60344"/>
    </ligand>
    <ligandPart>
        <name>Fe</name>
        <dbReference type="ChEBI" id="CHEBI:18248"/>
    </ligandPart>
</feature>
<feature type="binding site" evidence="1">
    <location>
        <position position="190"/>
    </location>
    <ligand>
        <name>FAD</name>
        <dbReference type="ChEBI" id="CHEBI:57692"/>
    </ligand>
</feature>
<feature type="binding site" evidence="1">
    <location>
        <begin position="205"/>
        <end position="208"/>
    </location>
    <ligand>
        <name>FAD</name>
        <dbReference type="ChEBI" id="CHEBI:57692"/>
    </ligand>
</feature>
<feature type="binding site" evidence="1">
    <location>
        <begin position="277"/>
        <end position="282"/>
    </location>
    <ligand>
        <name>NADP(+)</name>
        <dbReference type="ChEBI" id="CHEBI:58349"/>
    </ligand>
</feature>
<feature type="binding site" evidence="1">
    <location>
        <begin position="398"/>
        <end position="401"/>
    </location>
    <ligand>
        <name>FAD</name>
        <dbReference type="ChEBI" id="CHEBI:57692"/>
    </ligand>
</feature>
<feature type="site" description="Involved in heme-bound ligand stabilization and O-O bond activation" evidence="1">
    <location>
        <position position="29"/>
    </location>
</feature>
<feature type="site" description="Influences the redox potential of the prosthetic heme and FAD groups" evidence="1">
    <location>
        <position position="84"/>
    </location>
</feature>
<feature type="site" description="Influences the redox potential of the prosthetic heme and FAD groups" evidence="1">
    <location>
        <position position="397"/>
    </location>
</feature>
<sequence>MLSEKTIRIVKEITPLVAANAETITRRFYERMFEANPEVKAFFNQAHQHSGGQQKALAGAICAYFTHIDNPAVLMPAVELIAQKHVSLGIKPEHYPIVGSNLLAAIGDVMGDAATPEIVEAVSEAYGFLADIFIGREGAIYEEQASMPGGWNGTRTFVVTKKVRESEIVTSFYLKPEDEGPLPPFKPGQYITVHMDHPHTPTSPRNYSLSDCASQPHYRISVKREERLVPDAPDGLISNHLHDGIEEGHRIELGPPCGEFTVDPATIAKPIVLIAGGIGVTPLLSMAKSIVHANPNAELHFIQAARNSKVHAFADELRRLAQAGPNVHTKVIYDSPLPGDVEEGKCDEAGFVTENQIRESTPFTDADFYFCGPKPFMKNVHSCLRELGVDEHRVRYEFFGPKEELVAV</sequence>
<reference key="1">
    <citation type="journal article" date="2003" name="Proc. Natl. Acad. Sci. U.S.A.">
        <title>Complete genome sequence of the marine planctomycete Pirellula sp. strain 1.</title>
        <authorList>
            <person name="Gloeckner F.O."/>
            <person name="Kube M."/>
            <person name="Bauer M."/>
            <person name="Teeling H."/>
            <person name="Lombardot T."/>
            <person name="Ludwig W."/>
            <person name="Gade D."/>
            <person name="Beck A."/>
            <person name="Borzym K."/>
            <person name="Heitmann K."/>
            <person name="Rabus R."/>
            <person name="Schlesner H."/>
            <person name="Amann R."/>
            <person name="Reinhardt R."/>
        </authorList>
    </citation>
    <scope>NUCLEOTIDE SEQUENCE [LARGE SCALE GENOMIC DNA]</scope>
    <source>
        <strain>DSM 10527 / NCIMB 13988 / SH1</strain>
    </source>
</reference>
<keyword id="KW-0274">FAD</keyword>
<keyword id="KW-0285">Flavoprotein</keyword>
<keyword id="KW-0349">Heme</keyword>
<keyword id="KW-0408">Iron</keyword>
<keyword id="KW-0479">Metal-binding</keyword>
<keyword id="KW-0520">NAD</keyword>
<keyword id="KW-0521">NADP</keyword>
<keyword id="KW-0560">Oxidoreductase</keyword>
<keyword id="KW-0561">Oxygen transport</keyword>
<keyword id="KW-1185">Reference proteome</keyword>
<keyword id="KW-0813">Transport</keyword>
<gene>
    <name evidence="1" type="primary">hmp</name>
    <name type="synonym">fhp</name>
    <name type="ordered locus">RB12262</name>
</gene>
<evidence type="ECO:0000255" key="1">
    <source>
        <dbReference type="HAMAP-Rule" id="MF_01252"/>
    </source>
</evidence>
<evidence type="ECO:0000255" key="2">
    <source>
        <dbReference type="PROSITE-ProRule" id="PRU00238"/>
    </source>
</evidence>
<evidence type="ECO:0000305" key="3"/>
<organism>
    <name type="scientific">Rhodopirellula baltica (strain DSM 10527 / NCIMB 13988 / SH1)</name>
    <dbReference type="NCBI Taxonomy" id="243090"/>
    <lineage>
        <taxon>Bacteria</taxon>
        <taxon>Pseudomonadati</taxon>
        <taxon>Planctomycetota</taxon>
        <taxon>Planctomycetia</taxon>
        <taxon>Pirellulales</taxon>
        <taxon>Pirellulaceae</taxon>
        <taxon>Rhodopirellula</taxon>
    </lineage>
</organism>
<proteinExistence type="inferred from homology"/>
<dbReference type="EC" id="1.14.12.17" evidence="1"/>
<dbReference type="EMBL" id="BX294154">
    <property type="protein sequence ID" value="CAD77481.1"/>
    <property type="status" value="ALT_INIT"/>
    <property type="molecule type" value="Genomic_DNA"/>
</dbReference>
<dbReference type="RefSeq" id="NP_870404.1">
    <property type="nucleotide sequence ID" value="NC_005027.1"/>
</dbReference>
<dbReference type="RefSeq" id="WP_164922502.1">
    <property type="nucleotide sequence ID" value="NC_005027.1"/>
</dbReference>
<dbReference type="SMR" id="Q7UIY1"/>
<dbReference type="FunCoup" id="Q7UIY1">
    <property type="interactions" value="145"/>
</dbReference>
<dbReference type="STRING" id="243090.RB12262"/>
<dbReference type="EnsemblBacteria" id="CAD77481">
    <property type="protein sequence ID" value="CAD77481"/>
    <property type="gene ID" value="RB12262"/>
</dbReference>
<dbReference type="KEGG" id="rba:RB12262"/>
<dbReference type="PATRIC" id="fig|243090.15.peg.5920"/>
<dbReference type="eggNOG" id="COG1017">
    <property type="taxonomic scope" value="Bacteria"/>
</dbReference>
<dbReference type="eggNOG" id="COG1018">
    <property type="taxonomic scope" value="Bacteria"/>
</dbReference>
<dbReference type="HOGENOM" id="CLU_003827_12_0_0"/>
<dbReference type="InParanoid" id="Q7UIY1"/>
<dbReference type="OrthoDB" id="9801223at2"/>
<dbReference type="Proteomes" id="UP000001025">
    <property type="component" value="Chromosome"/>
</dbReference>
<dbReference type="GO" id="GO:0005737">
    <property type="term" value="C:cytoplasm"/>
    <property type="evidence" value="ECO:0000318"/>
    <property type="project" value="GO_Central"/>
</dbReference>
<dbReference type="GO" id="GO:0071949">
    <property type="term" value="F:FAD binding"/>
    <property type="evidence" value="ECO:0000318"/>
    <property type="project" value="GO_Central"/>
</dbReference>
<dbReference type="GO" id="GO:0020037">
    <property type="term" value="F:heme binding"/>
    <property type="evidence" value="ECO:0007669"/>
    <property type="project" value="InterPro"/>
</dbReference>
<dbReference type="GO" id="GO:0046872">
    <property type="term" value="F:metal ion binding"/>
    <property type="evidence" value="ECO:0007669"/>
    <property type="project" value="UniProtKB-KW"/>
</dbReference>
<dbReference type="GO" id="GO:0008941">
    <property type="term" value="F:nitric oxide dioxygenase NAD(P)H activity"/>
    <property type="evidence" value="ECO:0000318"/>
    <property type="project" value="GO_Central"/>
</dbReference>
<dbReference type="GO" id="GO:0019825">
    <property type="term" value="F:oxygen binding"/>
    <property type="evidence" value="ECO:0007669"/>
    <property type="project" value="InterPro"/>
</dbReference>
<dbReference type="GO" id="GO:0005344">
    <property type="term" value="F:oxygen carrier activity"/>
    <property type="evidence" value="ECO:0007669"/>
    <property type="project" value="UniProtKB-UniRule"/>
</dbReference>
<dbReference type="GO" id="GO:0071500">
    <property type="term" value="P:cellular response to nitrosative stress"/>
    <property type="evidence" value="ECO:0000318"/>
    <property type="project" value="GO_Central"/>
</dbReference>
<dbReference type="GO" id="GO:0046210">
    <property type="term" value="P:nitric oxide catabolic process"/>
    <property type="evidence" value="ECO:0000318"/>
    <property type="project" value="GO_Central"/>
</dbReference>
<dbReference type="CDD" id="cd14783">
    <property type="entry name" value="FHb-globin_3"/>
    <property type="match status" value="1"/>
</dbReference>
<dbReference type="CDD" id="cd06184">
    <property type="entry name" value="flavohem_like_fad_nad_binding"/>
    <property type="match status" value="1"/>
</dbReference>
<dbReference type="FunFam" id="1.10.490.10:FF:000003">
    <property type="entry name" value="Flavohemoprotein"/>
    <property type="match status" value="1"/>
</dbReference>
<dbReference type="FunFam" id="2.40.30.10:FF:000034">
    <property type="entry name" value="Flavohemoprotein"/>
    <property type="match status" value="1"/>
</dbReference>
<dbReference type="FunFam" id="3.40.50.80:FF:000010">
    <property type="entry name" value="Flavohemoprotein"/>
    <property type="match status" value="1"/>
</dbReference>
<dbReference type="Gene3D" id="1.10.490.10">
    <property type="entry name" value="Globins"/>
    <property type="match status" value="1"/>
</dbReference>
<dbReference type="Gene3D" id="3.40.50.80">
    <property type="entry name" value="Nucleotide-binding domain of ferredoxin-NADP reductase (FNR) module"/>
    <property type="match status" value="1"/>
</dbReference>
<dbReference type="Gene3D" id="2.40.30.10">
    <property type="entry name" value="Translation factors"/>
    <property type="match status" value="1"/>
</dbReference>
<dbReference type="HAMAP" id="MF_01252">
    <property type="entry name" value="Hmp"/>
    <property type="match status" value="1"/>
</dbReference>
<dbReference type="InterPro" id="IPR008333">
    <property type="entry name" value="Cbr1-like_FAD-bd_dom"/>
</dbReference>
<dbReference type="InterPro" id="IPR017927">
    <property type="entry name" value="FAD-bd_FR_type"/>
</dbReference>
<dbReference type="InterPro" id="IPR039261">
    <property type="entry name" value="FNR_nucleotide-bd"/>
</dbReference>
<dbReference type="InterPro" id="IPR000971">
    <property type="entry name" value="Globin"/>
</dbReference>
<dbReference type="InterPro" id="IPR009050">
    <property type="entry name" value="Globin-like_sf"/>
</dbReference>
<dbReference type="InterPro" id="IPR012292">
    <property type="entry name" value="Globin/Proto"/>
</dbReference>
<dbReference type="InterPro" id="IPR023950">
    <property type="entry name" value="Hmp"/>
</dbReference>
<dbReference type="InterPro" id="IPR001433">
    <property type="entry name" value="OxRdtase_FAD/NAD-bd"/>
</dbReference>
<dbReference type="InterPro" id="IPR017938">
    <property type="entry name" value="Riboflavin_synthase-like_b-brl"/>
</dbReference>
<dbReference type="NCBIfam" id="NF009805">
    <property type="entry name" value="PRK13289.1"/>
    <property type="match status" value="1"/>
</dbReference>
<dbReference type="PANTHER" id="PTHR43396">
    <property type="entry name" value="FLAVOHEMOPROTEIN"/>
    <property type="match status" value="1"/>
</dbReference>
<dbReference type="PANTHER" id="PTHR43396:SF3">
    <property type="entry name" value="FLAVOHEMOPROTEIN"/>
    <property type="match status" value="1"/>
</dbReference>
<dbReference type="Pfam" id="PF00970">
    <property type="entry name" value="FAD_binding_6"/>
    <property type="match status" value="1"/>
</dbReference>
<dbReference type="Pfam" id="PF00042">
    <property type="entry name" value="Globin"/>
    <property type="match status" value="1"/>
</dbReference>
<dbReference type="Pfam" id="PF00175">
    <property type="entry name" value="NAD_binding_1"/>
    <property type="match status" value="1"/>
</dbReference>
<dbReference type="PRINTS" id="PR00406">
    <property type="entry name" value="CYTB5RDTASE"/>
</dbReference>
<dbReference type="SUPFAM" id="SSF52343">
    <property type="entry name" value="Ferredoxin reductase-like, C-terminal NADP-linked domain"/>
    <property type="match status" value="1"/>
</dbReference>
<dbReference type="SUPFAM" id="SSF46458">
    <property type="entry name" value="Globin-like"/>
    <property type="match status" value="1"/>
</dbReference>
<dbReference type="SUPFAM" id="SSF63380">
    <property type="entry name" value="Riboflavin synthase domain-like"/>
    <property type="match status" value="1"/>
</dbReference>
<dbReference type="PROSITE" id="PS51384">
    <property type="entry name" value="FAD_FR"/>
    <property type="match status" value="1"/>
</dbReference>
<dbReference type="PROSITE" id="PS01033">
    <property type="entry name" value="GLOBIN"/>
    <property type="match status" value="1"/>
</dbReference>